<evidence type="ECO:0000255" key="1">
    <source>
        <dbReference type="HAMAP-Rule" id="MF_01306"/>
    </source>
</evidence>
<evidence type="ECO:0000256" key="2">
    <source>
        <dbReference type="SAM" id="MobiDB-lite"/>
    </source>
</evidence>
<evidence type="ECO:0000305" key="3"/>
<accession>Q49YF2</accession>
<keyword id="KW-1185">Reference proteome</keyword>
<keyword id="KW-0687">Ribonucleoprotein</keyword>
<keyword id="KW-0689">Ribosomal protein</keyword>
<keyword id="KW-0694">RNA-binding</keyword>
<keyword id="KW-0699">rRNA-binding</keyword>
<proteinExistence type="inferred from homology"/>
<name>RS4_STAS1</name>
<feature type="chain" id="PRO_0000132465" description="Small ribosomal subunit protein uS4">
    <location>
        <begin position="1"/>
        <end position="200"/>
    </location>
</feature>
<feature type="domain" description="S4 RNA-binding" evidence="1">
    <location>
        <begin position="92"/>
        <end position="155"/>
    </location>
</feature>
<feature type="region of interest" description="Disordered" evidence="2">
    <location>
        <begin position="20"/>
        <end position="41"/>
    </location>
</feature>
<organism>
    <name type="scientific">Staphylococcus saprophyticus subsp. saprophyticus (strain ATCC 15305 / DSM 20229 / NCIMB 8711 / NCTC 7292 / S-41)</name>
    <dbReference type="NCBI Taxonomy" id="342451"/>
    <lineage>
        <taxon>Bacteria</taxon>
        <taxon>Bacillati</taxon>
        <taxon>Bacillota</taxon>
        <taxon>Bacilli</taxon>
        <taxon>Bacillales</taxon>
        <taxon>Staphylococcaceae</taxon>
        <taxon>Staphylococcus</taxon>
    </lineage>
</organism>
<sequence length="200" mass="23144">MARFRGSNWKKSRRLGISLSGTGKELEKRPYAPGQHGPNQRKKLSEYALQLREKQKLRYLYGMTERQFRNTFEIAGNQHGVHGENFMQLLAARLDAVVYSLGLARTRRQARQIVNHGHIEVDGKRVDIPSYTLKPGQEISVREKSLKLDIIAESVEINNFVPDYLEFDADNLKGKYIRVPERSELPAEINEQLIVEYYSR</sequence>
<protein>
    <recommendedName>
        <fullName evidence="1">Small ribosomal subunit protein uS4</fullName>
    </recommendedName>
    <alternativeName>
        <fullName evidence="3">30S ribosomal protein S4</fullName>
    </alternativeName>
</protein>
<dbReference type="EMBL" id="AP008934">
    <property type="protein sequence ID" value="BAE18189.1"/>
    <property type="molecule type" value="Genomic_DNA"/>
</dbReference>
<dbReference type="RefSeq" id="WP_002483023.1">
    <property type="nucleotide sequence ID" value="NZ_MTGA01000033.1"/>
</dbReference>
<dbReference type="SMR" id="Q49YF2"/>
<dbReference type="GeneID" id="79050119"/>
<dbReference type="KEGG" id="ssp:SSP1044"/>
<dbReference type="eggNOG" id="COG0522">
    <property type="taxonomic scope" value="Bacteria"/>
</dbReference>
<dbReference type="HOGENOM" id="CLU_092403_0_1_9"/>
<dbReference type="OrthoDB" id="9803672at2"/>
<dbReference type="Proteomes" id="UP000006371">
    <property type="component" value="Chromosome"/>
</dbReference>
<dbReference type="GO" id="GO:0015935">
    <property type="term" value="C:small ribosomal subunit"/>
    <property type="evidence" value="ECO:0007669"/>
    <property type="project" value="InterPro"/>
</dbReference>
<dbReference type="GO" id="GO:0019843">
    <property type="term" value="F:rRNA binding"/>
    <property type="evidence" value="ECO:0007669"/>
    <property type="project" value="UniProtKB-UniRule"/>
</dbReference>
<dbReference type="GO" id="GO:0003735">
    <property type="term" value="F:structural constituent of ribosome"/>
    <property type="evidence" value="ECO:0007669"/>
    <property type="project" value="InterPro"/>
</dbReference>
<dbReference type="GO" id="GO:0042274">
    <property type="term" value="P:ribosomal small subunit biogenesis"/>
    <property type="evidence" value="ECO:0007669"/>
    <property type="project" value="TreeGrafter"/>
</dbReference>
<dbReference type="GO" id="GO:0006412">
    <property type="term" value="P:translation"/>
    <property type="evidence" value="ECO:0007669"/>
    <property type="project" value="UniProtKB-UniRule"/>
</dbReference>
<dbReference type="CDD" id="cd00165">
    <property type="entry name" value="S4"/>
    <property type="match status" value="1"/>
</dbReference>
<dbReference type="FunFam" id="1.10.1050.10:FF:000001">
    <property type="entry name" value="30S ribosomal protein S4"/>
    <property type="match status" value="1"/>
</dbReference>
<dbReference type="FunFam" id="3.10.290.10:FF:000001">
    <property type="entry name" value="30S ribosomal protein S4"/>
    <property type="match status" value="1"/>
</dbReference>
<dbReference type="Gene3D" id="1.10.1050.10">
    <property type="entry name" value="Ribosomal Protein S4 Delta 41, Chain A, domain 1"/>
    <property type="match status" value="1"/>
</dbReference>
<dbReference type="Gene3D" id="3.10.290.10">
    <property type="entry name" value="RNA-binding S4 domain"/>
    <property type="match status" value="1"/>
</dbReference>
<dbReference type="HAMAP" id="MF_01306_B">
    <property type="entry name" value="Ribosomal_uS4_B"/>
    <property type="match status" value="1"/>
</dbReference>
<dbReference type="InterPro" id="IPR022801">
    <property type="entry name" value="Ribosomal_uS4"/>
</dbReference>
<dbReference type="InterPro" id="IPR005709">
    <property type="entry name" value="Ribosomal_uS4_bac-type"/>
</dbReference>
<dbReference type="InterPro" id="IPR018079">
    <property type="entry name" value="Ribosomal_uS4_CS"/>
</dbReference>
<dbReference type="InterPro" id="IPR001912">
    <property type="entry name" value="Ribosomal_uS4_N"/>
</dbReference>
<dbReference type="InterPro" id="IPR002942">
    <property type="entry name" value="S4_RNA-bd"/>
</dbReference>
<dbReference type="InterPro" id="IPR036986">
    <property type="entry name" value="S4_RNA-bd_sf"/>
</dbReference>
<dbReference type="NCBIfam" id="NF003717">
    <property type="entry name" value="PRK05327.1"/>
    <property type="match status" value="1"/>
</dbReference>
<dbReference type="NCBIfam" id="TIGR01017">
    <property type="entry name" value="rpsD_bact"/>
    <property type="match status" value="1"/>
</dbReference>
<dbReference type="PANTHER" id="PTHR11831">
    <property type="entry name" value="30S 40S RIBOSOMAL PROTEIN"/>
    <property type="match status" value="1"/>
</dbReference>
<dbReference type="PANTHER" id="PTHR11831:SF4">
    <property type="entry name" value="SMALL RIBOSOMAL SUBUNIT PROTEIN US4M"/>
    <property type="match status" value="1"/>
</dbReference>
<dbReference type="Pfam" id="PF00163">
    <property type="entry name" value="Ribosomal_S4"/>
    <property type="match status" value="1"/>
</dbReference>
<dbReference type="Pfam" id="PF01479">
    <property type="entry name" value="S4"/>
    <property type="match status" value="1"/>
</dbReference>
<dbReference type="SMART" id="SM01390">
    <property type="entry name" value="Ribosomal_S4"/>
    <property type="match status" value="1"/>
</dbReference>
<dbReference type="SMART" id="SM00363">
    <property type="entry name" value="S4"/>
    <property type="match status" value="1"/>
</dbReference>
<dbReference type="SUPFAM" id="SSF55174">
    <property type="entry name" value="Alpha-L RNA-binding motif"/>
    <property type="match status" value="1"/>
</dbReference>
<dbReference type="PROSITE" id="PS00632">
    <property type="entry name" value="RIBOSOMAL_S4"/>
    <property type="match status" value="1"/>
</dbReference>
<dbReference type="PROSITE" id="PS50889">
    <property type="entry name" value="S4"/>
    <property type="match status" value="1"/>
</dbReference>
<reference key="1">
    <citation type="journal article" date="2005" name="Proc. Natl. Acad. Sci. U.S.A.">
        <title>Whole genome sequence of Staphylococcus saprophyticus reveals the pathogenesis of uncomplicated urinary tract infection.</title>
        <authorList>
            <person name="Kuroda M."/>
            <person name="Yamashita A."/>
            <person name="Hirakawa H."/>
            <person name="Kumano M."/>
            <person name="Morikawa K."/>
            <person name="Higashide M."/>
            <person name="Maruyama A."/>
            <person name="Inose Y."/>
            <person name="Matoba K."/>
            <person name="Toh H."/>
            <person name="Kuhara S."/>
            <person name="Hattori M."/>
            <person name="Ohta T."/>
        </authorList>
    </citation>
    <scope>NUCLEOTIDE SEQUENCE [LARGE SCALE GENOMIC DNA]</scope>
    <source>
        <strain>ATCC 15305 / DSM 20229 / NCIMB 8711 / NCTC 7292 / S-41</strain>
    </source>
</reference>
<comment type="function">
    <text evidence="1">One of the primary rRNA binding proteins, it binds directly to 16S rRNA where it nucleates assembly of the body of the 30S subunit.</text>
</comment>
<comment type="function">
    <text evidence="1">With S5 and S12 plays an important role in translational accuracy.</text>
</comment>
<comment type="subunit">
    <text evidence="1">Part of the 30S ribosomal subunit. Contacts protein S5. The interaction surface between S4 and S5 is involved in control of translational fidelity.</text>
</comment>
<comment type="similarity">
    <text evidence="1">Belongs to the universal ribosomal protein uS4 family.</text>
</comment>
<gene>
    <name evidence="1" type="primary">rpsD</name>
    <name type="ordered locus">SSP1044</name>
</gene>